<feature type="chain" id="PRO_1000007685" description="DNA-directed RNA polymerase subunit alpha">
    <location>
        <begin position="1"/>
        <end position="315"/>
    </location>
</feature>
<feature type="region of interest" description="Alpha N-terminal domain (alpha-NTD)" evidence="1">
    <location>
        <begin position="1"/>
        <end position="228"/>
    </location>
</feature>
<feature type="region of interest" description="Alpha C-terminal domain (alpha-CTD)" evidence="1">
    <location>
        <begin position="245"/>
        <end position="315"/>
    </location>
</feature>
<accession>A5I7H7</accession>
<accession>A7G8Q9</accession>
<comment type="function">
    <text evidence="1">DNA-dependent RNA polymerase catalyzes the transcription of DNA into RNA using the four ribonucleoside triphosphates as substrates.</text>
</comment>
<comment type="catalytic activity">
    <reaction evidence="1">
        <text>RNA(n) + a ribonucleoside 5'-triphosphate = RNA(n+1) + diphosphate</text>
        <dbReference type="Rhea" id="RHEA:21248"/>
        <dbReference type="Rhea" id="RHEA-COMP:14527"/>
        <dbReference type="Rhea" id="RHEA-COMP:17342"/>
        <dbReference type="ChEBI" id="CHEBI:33019"/>
        <dbReference type="ChEBI" id="CHEBI:61557"/>
        <dbReference type="ChEBI" id="CHEBI:140395"/>
        <dbReference type="EC" id="2.7.7.6"/>
    </reaction>
</comment>
<comment type="subunit">
    <text evidence="1">Homodimer. The RNAP catalytic core consists of 2 alpha, 1 beta, 1 beta' and 1 omega subunit. When a sigma factor is associated with the core the holoenzyme is formed, which can initiate transcription.</text>
</comment>
<comment type="domain">
    <text evidence="1">The N-terminal domain is essential for RNAP assembly and basal transcription, whereas the C-terminal domain is involved in interaction with transcriptional regulators and with upstream promoter elements.</text>
</comment>
<comment type="similarity">
    <text evidence="1">Belongs to the RNA polymerase alpha chain family.</text>
</comment>
<gene>
    <name evidence="1" type="primary">rpoA</name>
    <name type="ordered locus">CBO3452</name>
    <name type="ordered locus">CLC_3396</name>
</gene>
<protein>
    <recommendedName>
        <fullName evidence="1">DNA-directed RNA polymerase subunit alpha</fullName>
        <shortName evidence="1">RNAP subunit alpha</shortName>
        <ecNumber evidence="1">2.7.7.6</ecNumber>
    </recommendedName>
    <alternativeName>
        <fullName evidence="1">RNA polymerase subunit alpha</fullName>
    </alternativeName>
    <alternativeName>
        <fullName evidence="1">Transcriptase subunit alpha</fullName>
    </alternativeName>
</protein>
<sequence>MLEIEKPKIECVENAEDGSYGKFVIEPLERGYGITLGNALRRILLSSLPGVAADHIKIDSVLHEFSTVQGVKEDVTELILNIKCLALTMNGEGPKTIYIDEVGPKEVTAADIKTDGDVEVINKDLHIATLDENGKMYMEINVNRGRGYVTQNKNKTKDMPIGSIAVDSIYTPVKRVNFSVENTRVGQITDYDKLTIEVWTNGTIRPEEAVSLSAKILIEHFKLFMTLTDHADDMEIMVEKEEDKKEKVLEMTIEELDLSVRSYNCLKRAGINTVQELCERSMDDMMKVRNLGKKSLEEVEQKLEALGLGLRKSED</sequence>
<reference key="1">
    <citation type="journal article" date="2007" name="Genome Res.">
        <title>Genome sequence of a proteolytic (Group I) Clostridium botulinum strain Hall A and comparative analysis of the clostridial genomes.</title>
        <authorList>
            <person name="Sebaihia M."/>
            <person name="Peck M.W."/>
            <person name="Minton N.P."/>
            <person name="Thomson N.R."/>
            <person name="Holden M.T.G."/>
            <person name="Mitchell W.J."/>
            <person name="Carter A.T."/>
            <person name="Bentley S.D."/>
            <person name="Mason D.R."/>
            <person name="Crossman L."/>
            <person name="Paul C.J."/>
            <person name="Ivens A."/>
            <person name="Wells-Bennik M.H.J."/>
            <person name="Davis I.J."/>
            <person name="Cerdeno-Tarraga A.M."/>
            <person name="Churcher C."/>
            <person name="Quail M.A."/>
            <person name="Chillingworth T."/>
            <person name="Feltwell T."/>
            <person name="Fraser A."/>
            <person name="Goodhead I."/>
            <person name="Hance Z."/>
            <person name="Jagels K."/>
            <person name="Larke N."/>
            <person name="Maddison M."/>
            <person name="Moule S."/>
            <person name="Mungall K."/>
            <person name="Norbertczak H."/>
            <person name="Rabbinowitsch E."/>
            <person name="Sanders M."/>
            <person name="Simmonds M."/>
            <person name="White B."/>
            <person name="Whithead S."/>
            <person name="Parkhill J."/>
        </authorList>
    </citation>
    <scope>NUCLEOTIDE SEQUENCE [LARGE SCALE GENOMIC DNA]</scope>
    <source>
        <strain>Hall / ATCC 3502 / NCTC 13319 / Type A</strain>
    </source>
</reference>
<reference key="2">
    <citation type="journal article" date="2007" name="PLoS ONE">
        <title>Analysis of the neurotoxin complex genes in Clostridium botulinum A1-A4 and B1 strains: BoNT/A3, /Ba4 and /B1 clusters are located within plasmids.</title>
        <authorList>
            <person name="Smith T.J."/>
            <person name="Hill K.K."/>
            <person name="Foley B.T."/>
            <person name="Detter J.C."/>
            <person name="Munk A.C."/>
            <person name="Bruce D.C."/>
            <person name="Doggett N.A."/>
            <person name="Smith L.A."/>
            <person name="Marks J.D."/>
            <person name="Xie G."/>
            <person name="Brettin T.S."/>
        </authorList>
    </citation>
    <scope>NUCLEOTIDE SEQUENCE [LARGE SCALE GENOMIC DNA]</scope>
    <source>
        <strain>Hall / ATCC 3502 / NCTC 13319 / Type A</strain>
    </source>
</reference>
<proteinExistence type="inferred from homology"/>
<keyword id="KW-0240">DNA-directed RNA polymerase</keyword>
<keyword id="KW-0548">Nucleotidyltransferase</keyword>
<keyword id="KW-1185">Reference proteome</keyword>
<keyword id="KW-0804">Transcription</keyword>
<keyword id="KW-0808">Transferase</keyword>
<dbReference type="EC" id="2.7.7.6" evidence="1"/>
<dbReference type="EMBL" id="CP000727">
    <property type="protein sequence ID" value="ABS38081.1"/>
    <property type="molecule type" value="Genomic_DNA"/>
</dbReference>
<dbReference type="EMBL" id="AM412317">
    <property type="protein sequence ID" value="CAL85012.1"/>
    <property type="molecule type" value="Genomic_DNA"/>
</dbReference>
<dbReference type="RefSeq" id="WP_003357472.1">
    <property type="nucleotide sequence ID" value="NC_009698.1"/>
</dbReference>
<dbReference type="RefSeq" id="YP_001255933.1">
    <property type="nucleotide sequence ID" value="NC_009495.1"/>
</dbReference>
<dbReference type="RefSeq" id="YP_001389174.1">
    <property type="nucleotide sequence ID" value="NC_009698.1"/>
</dbReference>
<dbReference type="SMR" id="A5I7H7"/>
<dbReference type="KEGG" id="cbh:CLC_3396"/>
<dbReference type="KEGG" id="cbo:CBO3452"/>
<dbReference type="PATRIC" id="fig|413999.7.peg.3428"/>
<dbReference type="HOGENOM" id="CLU_053084_0_1_9"/>
<dbReference type="PRO" id="PR:A5I7H7"/>
<dbReference type="Proteomes" id="UP000001986">
    <property type="component" value="Chromosome"/>
</dbReference>
<dbReference type="GO" id="GO:0005737">
    <property type="term" value="C:cytoplasm"/>
    <property type="evidence" value="ECO:0000318"/>
    <property type="project" value="GO_Central"/>
</dbReference>
<dbReference type="GO" id="GO:0000428">
    <property type="term" value="C:DNA-directed RNA polymerase complex"/>
    <property type="evidence" value="ECO:0007669"/>
    <property type="project" value="UniProtKB-KW"/>
</dbReference>
<dbReference type="GO" id="GO:0003677">
    <property type="term" value="F:DNA binding"/>
    <property type="evidence" value="ECO:0007669"/>
    <property type="project" value="UniProtKB-UniRule"/>
</dbReference>
<dbReference type="GO" id="GO:0003899">
    <property type="term" value="F:DNA-directed RNA polymerase activity"/>
    <property type="evidence" value="ECO:0007669"/>
    <property type="project" value="UniProtKB-UniRule"/>
</dbReference>
<dbReference type="GO" id="GO:0046983">
    <property type="term" value="F:protein dimerization activity"/>
    <property type="evidence" value="ECO:0007669"/>
    <property type="project" value="InterPro"/>
</dbReference>
<dbReference type="GO" id="GO:0006351">
    <property type="term" value="P:DNA-templated transcription"/>
    <property type="evidence" value="ECO:0007669"/>
    <property type="project" value="UniProtKB-UniRule"/>
</dbReference>
<dbReference type="CDD" id="cd06928">
    <property type="entry name" value="RNAP_alpha_NTD"/>
    <property type="match status" value="1"/>
</dbReference>
<dbReference type="FunFam" id="1.10.150.20:FF:000001">
    <property type="entry name" value="DNA-directed RNA polymerase subunit alpha"/>
    <property type="match status" value="1"/>
</dbReference>
<dbReference type="FunFam" id="2.170.120.12:FF:000001">
    <property type="entry name" value="DNA-directed RNA polymerase subunit alpha"/>
    <property type="match status" value="1"/>
</dbReference>
<dbReference type="Gene3D" id="1.10.150.20">
    <property type="entry name" value="5' to 3' exonuclease, C-terminal subdomain"/>
    <property type="match status" value="1"/>
</dbReference>
<dbReference type="Gene3D" id="2.170.120.12">
    <property type="entry name" value="DNA-directed RNA polymerase, insert domain"/>
    <property type="match status" value="1"/>
</dbReference>
<dbReference type="Gene3D" id="3.30.1360.10">
    <property type="entry name" value="RNA polymerase, RBP11-like subunit"/>
    <property type="match status" value="1"/>
</dbReference>
<dbReference type="HAMAP" id="MF_00059">
    <property type="entry name" value="RNApol_bact_RpoA"/>
    <property type="match status" value="1"/>
</dbReference>
<dbReference type="InterPro" id="IPR011262">
    <property type="entry name" value="DNA-dir_RNA_pol_insert"/>
</dbReference>
<dbReference type="InterPro" id="IPR011263">
    <property type="entry name" value="DNA-dir_RNA_pol_RpoA/D/Rpb3"/>
</dbReference>
<dbReference type="InterPro" id="IPR011773">
    <property type="entry name" value="DNA-dir_RpoA"/>
</dbReference>
<dbReference type="InterPro" id="IPR036603">
    <property type="entry name" value="RBP11-like"/>
</dbReference>
<dbReference type="InterPro" id="IPR011260">
    <property type="entry name" value="RNAP_asu_C"/>
</dbReference>
<dbReference type="InterPro" id="IPR036643">
    <property type="entry name" value="RNApol_insert_sf"/>
</dbReference>
<dbReference type="NCBIfam" id="NF003513">
    <property type="entry name" value="PRK05182.1-2"/>
    <property type="match status" value="1"/>
</dbReference>
<dbReference type="NCBIfam" id="NF003515">
    <property type="entry name" value="PRK05182.2-1"/>
    <property type="match status" value="1"/>
</dbReference>
<dbReference type="NCBIfam" id="NF003516">
    <property type="entry name" value="PRK05182.2-2"/>
    <property type="match status" value="1"/>
</dbReference>
<dbReference type="NCBIfam" id="NF003519">
    <property type="entry name" value="PRK05182.2-5"/>
    <property type="match status" value="1"/>
</dbReference>
<dbReference type="NCBIfam" id="TIGR02027">
    <property type="entry name" value="rpoA"/>
    <property type="match status" value="1"/>
</dbReference>
<dbReference type="Pfam" id="PF01000">
    <property type="entry name" value="RNA_pol_A_bac"/>
    <property type="match status" value="1"/>
</dbReference>
<dbReference type="Pfam" id="PF03118">
    <property type="entry name" value="RNA_pol_A_CTD"/>
    <property type="match status" value="1"/>
</dbReference>
<dbReference type="Pfam" id="PF01193">
    <property type="entry name" value="RNA_pol_L"/>
    <property type="match status" value="1"/>
</dbReference>
<dbReference type="SMART" id="SM00662">
    <property type="entry name" value="RPOLD"/>
    <property type="match status" value="1"/>
</dbReference>
<dbReference type="SUPFAM" id="SSF47789">
    <property type="entry name" value="C-terminal domain of RNA polymerase alpha subunit"/>
    <property type="match status" value="1"/>
</dbReference>
<dbReference type="SUPFAM" id="SSF56553">
    <property type="entry name" value="Insert subdomain of RNA polymerase alpha subunit"/>
    <property type="match status" value="1"/>
</dbReference>
<dbReference type="SUPFAM" id="SSF55257">
    <property type="entry name" value="RBP11-like subunits of RNA polymerase"/>
    <property type="match status" value="1"/>
</dbReference>
<evidence type="ECO:0000255" key="1">
    <source>
        <dbReference type="HAMAP-Rule" id="MF_00059"/>
    </source>
</evidence>
<name>RPOA_CLOBH</name>
<organism>
    <name type="scientific">Clostridium botulinum (strain Hall / ATCC 3502 / NCTC 13319 / Type A)</name>
    <dbReference type="NCBI Taxonomy" id="441771"/>
    <lineage>
        <taxon>Bacteria</taxon>
        <taxon>Bacillati</taxon>
        <taxon>Bacillota</taxon>
        <taxon>Clostridia</taxon>
        <taxon>Eubacteriales</taxon>
        <taxon>Clostridiaceae</taxon>
        <taxon>Clostridium</taxon>
    </lineage>
</organism>